<organism>
    <name type="scientific">Chromohalobacter salexigens (strain ATCC BAA-138 / DSM 3043 / CIP 106854 / NCIMB 13768 / 1H11)</name>
    <dbReference type="NCBI Taxonomy" id="290398"/>
    <lineage>
        <taxon>Bacteria</taxon>
        <taxon>Pseudomonadati</taxon>
        <taxon>Pseudomonadota</taxon>
        <taxon>Gammaproteobacteria</taxon>
        <taxon>Oceanospirillales</taxon>
        <taxon>Halomonadaceae</taxon>
        <taxon>Chromohalobacter</taxon>
    </lineage>
</organism>
<keyword id="KW-0068">Autocatalytic cleavage</keyword>
<keyword id="KW-0210">Decarboxylase</keyword>
<keyword id="KW-0456">Lyase</keyword>
<keyword id="KW-0620">Polyamine biosynthesis</keyword>
<keyword id="KW-0670">Pyruvate</keyword>
<keyword id="KW-1185">Reference proteome</keyword>
<keyword id="KW-0949">S-adenosyl-L-methionine</keyword>
<keyword id="KW-0704">Schiff base</keyword>
<keyword id="KW-0745">Spermidine biosynthesis</keyword>
<keyword id="KW-0865">Zymogen</keyword>
<feature type="chain" id="PRO_0000364359" description="S-adenosylmethionine decarboxylase beta chain" evidence="1">
    <location>
        <begin position="1"/>
        <end position="113"/>
    </location>
</feature>
<feature type="chain" id="PRO_0000364360" description="S-adenosylmethionine decarboxylase alpha chain" evidence="1">
    <location>
        <begin position="114"/>
        <end position="264"/>
    </location>
</feature>
<feature type="active site" description="Schiff-base intermediate with substrate; via pyruvic acid" evidence="1">
    <location>
        <position position="114"/>
    </location>
</feature>
<feature type="active site" description="Proton acceptor; for processing activity" evidence="1">
    <location>
        <position position="119"/>
    </location>
</feature>
<feature type="active site" description="Proton donor; for catalytic activity" evidence="1">
    <location>
        <position position="142"/>
    </location>
</feature>
<feature type="site" description="Cleavage (non-hydrolytic); by autolysis" evidence="1">
    <location>
        <begin position="113"/>
        <end position="114"/>
    </location>
</feature>
<feature type="modified residue" description="Pyruvic acid (Ser); by autocatalysis" evidence="1">
    <location>
        <position position="114"/>
    </location>
</feature>
<proteinExistence type="inferred from homology"/>
<accession>Q1QZ38</accession>
<reference key="1">
    <citation type="journal article" date="2011" name="Stand. Genomic Sci.">
        <title>Complete genome sequence of the halophilic and highly halotolerant Chromohalobacter salexigens type strain (1H11(T)).</title>
        <authorList>
            <person name="Copeland A."/>
            <person name="O'Connor K."/>
            <person name="Lucas S."/>
            <person name="Lapidus A."/>
            <person name="Berry K.W."/>
            <person name="Detter J.C."/>
            <person name="Del Rio T.G."/>
            <person name="Hammon N."/>
            <person name="Dalin E."/>
            <person name="Tice H."/>
            <person name="Pitluck S."/>
            <person name="Bruce D."/>
            <person name="Goodwin L."/>
            <person name="Han C."/>
            <person name="Tapia R."/>
            <person name="Saunders E."/>
            <person name="Schmutz J."/>
            <person name="Brettin T."/>
            <person name="Larimer F."/>
            <person name="Land M."/>
            <person name="Hauser L."/>
            <person name="Vargas C."/>
            <person name="Nieto J.J."/>
            <person name="Kyrpides N.C."/>
            <person name="Ivanova N."/>
            <person name="Goker M."/>
            <person name="Klenk H.P."/>
            <person name="Csonka L.N."/>
            <person name="Woyke T."/>
        </authorList>
    </citation>
    <scope>NUCLEOTIDE SEQUENCE [LARGE SCALE GENOMIC DNA]</scope>
    <source>
        <strain>ATCC BAA-138 / DSM 3043 / CIP 106854 / NCIMB 13768 / 1H11</strain>
    </source>
</reference>
<evidence type="ECO:0000255" key="1">
    <source>
        <dbReference type="HAMAP-Rule" id="MF_00465"/>
    </source>
</evidence>
<protein>
    <recommendedName>
        <fullName evidence="1">S-adenosylmethionine decarboxylase proenzyme</fullName>
        <shortName evidence="1">AdoMetDC</shortName>
        <shortName evidence="1">SAMDC</shortName>
        <ecNumber evidence="1">4.1.1.50</ecNumber>
    </recommendedName>
    <component>
        <recommendedName>
            <fullName evidence="1">S-adenosylmethionine decarboxylase beta chain</fullName>
        </recommendedName>
    </component>
    <component>
        <recommendedName>
            <fullName evidence="1">S-adenosylmethionine decarboxylase alpha chain</fullName>
        </recommendedName>
    </component>
</protein>
<dbReference type="EC" id="4.1.1.50" evidence="1"/>
<dbReference type="EMBL" id="CP000285">
    <property type="protein sequence ID" value="ABE58270.1"/>
    <property type="molecule type" value="Genomic_DNA"/>
</dbReference>
<dbReference type="RefSeq" id="WP_011506216.1">
    <property type="nucleotide sequence ID" value="NC_007963.1"/>
</dbReference>
<dbReference type="SMR" id="Q1QZ38"/>
<dbReference type="STRING" id="290398.Csal_0913"/>
<dbReference type="GeneID" id="95333669"/>
<dbReference type="KEGG" id="csa:Csal_0913"/>
<dbReference type="eggNOG" id="COG1586">
    <property type="taxonomic scope" value="Bacteria"/>
</dbReference>
<dbReference type="HOGENOM" id="CLU_092007_0_0_6"/>
<dbReference type="OrthoDB" id="5290709at2"/>
<dbReference type="UniPathway" id="UPA00331">
    <property type="reaction ID" value="UER00451"/>
</dbReference>
<dbReference type="Proteomes" id="UP000000239">
    <property type="component" value="Chromosome"/>
</dbReference>
<dbReference type="GO" id="GO:0005829">
    <property type="term" value="C:cytosol"/>
    <property type="evidence" value="ECO:0007669"/>
    <property type="project" value="TreeGrafter"/>
</dbReference>
<dbReference type="GO" id="GO:0004014">
    <property type="term" value="F:adenosylmethionine decarboxylase activity"/>
    <property type="evidence" value="ECO:0007669"/>
    <property type="project" value="UniProtKB-UniRule"/>
</dbReference>
<dbReference type="GO" id="GO:0008295">
    <property type="term" value="P:spermidine biosynthetic process"/>
    <property type="evidence" value="ECO:0007669"/>
    <property type="project" value="UniProtKB-UniRule"/>
</dbReference>
<dbReference type="Gene3D" id="3.60.90.10">
    <property type="entry name" value="S-adenosylmethionine decarboxylase"/>
    <property type="match status" value="1"/>
</dbReference>
<dbReference type="HAMAP" id="MF_00465">
    <property type="entry name" value="AdoMetDC_2"/>
    <property type="match status" value="1"/>
</dbReference>
<dbReference type="InterPro" id="IPR003826">
    <property type="entry name" value="AdoMetDC_fam_prok"/>
</dbReference>
<dbReference type="InterPro" id="IPR009165">
    <property type="entry name" value="S-AdoMet_deCO2ase_bac"/>
</dbReference>
<dbReference type="InterPro" id="IPR016067">
    <property type="entry name" value="S-AdoMet_deCO2ase_core"/>
</dbReference>
<dbReference type="NCBIfam" id="TIGR03331">
    <property type="entry name" value="SAM_DCase_Eco"/>
    <property type="match status" value="1"/>
</dbReference>
<dbReference type="PANTHER" id="PTHR33866">
    <property type="entry name" value="S-ADENOSYLMETHIONINE DECARBOXYLASE PROENZYME"/>
    <property type="match status" value="1"/>
</dbReference>
<dbReference type="PANTHER" id="PTHR33866:SF1">
    <property type="entry name" value="S-ADENOSYLMETHIONINE DECARBOXYLASE PROENZYME"/>
    <property type="match status" value="1"/>
</dbReference>
<dbReference type="Pfam" id="PF02675">
    <property type="entry name" value="AdoMet_dc"/>
    <property type="match status" value="1"/>
</dbReference>
<dbReference type="PIRSF" id="PIRSF001356">
    <property type="entry name" value="SAM_decarboxylas"/>
    <property type="match status" value="1"/>
</dbReference>
<dbReference type="SUPFAM" id="SSF56276">
    <property type="entry name" value="S-adenosylmethionine decarboxylase"/>
    <property type="match status" value="1"/>
</dbReference>
<sequence length="264" mass="30680">MTDNLRLHGFNNLTSSLSFNIYDICYAKTEEQRKAYIDYIDELYNAERLTQILKDVTNIIGAHVLNISRQDYEPHGASVTILIAEHELDEHDPEHIEPGPGPLPQTVLGHLDKSHVTVHTYPESHPDNGISTFRLDIDVSTCGMISPLKALNYLIHSFDSDIVTTDYRVRGFTRDVDGRKLFIDHDITSIQDYLAEDTKRAYQMVDVNVYQENMFHTKMLLKDFDLDNYLFGSTRRDLTFEEARDIEDRLRKEMLEIFYSRNLD</sequence>
<comment type="function">
    <text evidence="1">Catalyzes the decarboxylation of S-adenosylmethionine to S-adenosylmethioninamine (dcAdoMet), the propylamine donor required for the synthesis of the polyamines spermine and spermidine from the diamine putrescine.</text>
</comment>
<comment type="catalytic activity">
    <reaction evidence="1">
        <text>S-adenosyl-L-methionine + H(+) = S-adenosyl 3-(methylsulfanyl)propylamine + CO2</text>
        <dbReference type="Rhea" id="RHEA:15981"/>
        <dbReference type="ChEBI" id="CHEBI:15378"/>
        <dbReference type="ChEBI" id="CHEBI:16526"/>
        <dbReference type="ChEBI" id="CHEBI:57443"/>
        <dbReference type="ChEBI" id="CHEBI:59789"/>
        <dbReference type="EC" id="4.1.1.50"/>
    </reaction>
</comment>
<comment type="cofactor">
    <cofactor evidence="1">
        <name>pyruvate</name>
        <dbReference type="ChEBI" id="CHEBI:15361"/>
    </cofactor>
    <text evidence="1">Binds 1 pyruvoyl group covalently per subunit.</text>
</comment>
<comment type="pathway">
    <text evidence="1">Amine and polyamine biosynthesis; S-adenosylmethioninamine biosynthesis; S-adenosylmethioninamine from S-adenosyl-L-methionine: step 1/1.</text>
</comment>
<comment type="subunit">
    <text evidence="1">Heterooctamer of four alpha and four beta chains arranged as a tetramer of alpha/beta heterodimers.</text>
</comment>
<comment type="PTM">
    <text evidence="1">Is synthesized initially as an inactive proenzyme. Formation of the active enzyme involves a self-maturation process in which the active site pyruvoyl group is generated from an internal serine residue via an autocatalytic post-translational modification. Two non-identical subunits are generated from the proenzyme in this reaction, and the pyruvate is formed at the N-terminus of the alpha chain, which is derived from the carboxyl end of the proenzyme. The post-translation cleavage follows an unusual pathway, termed non-hydrolytic serinolysis, in which the side chain hydroxyl group of the serine supplies its oxygen atom to form the C-terminus of the beta chain, while the remainder of the serine residue undergoes an oxidative deamination to produce ammonia and the pyruvoyl group blocking the N-terminus of the alpha chain.</text>
</comment>
<comment type="similarity">
    <text evidence="1">Belongs to the prokaryotic AdoMetDC family. Type 2 subfamily.</text>
</comment>
<gene>
    <name evidence="1" type="primary">speD</name>
    <name type="ordered locus">Csal_0913</name>
</gene>
<name>SPED_CHRSD</name>